<comment type="catalytic activity">
    <reaction evidence="1">
        <text>2-(N(omega)-L-arginino)succinate = fumarate + L-arginine</text>
        <dbReference type="Rhea" id="RHEA:24020"/>
        <dbReference type="ChEBI" id="CHEBI:29806"/>
        <dbReference type="ChEBI" id="CHEBI:32682"/>
        <dbReference type="ChEBI" id="CHEBI:57472"/>
        <dbReference type="EC" id="4.3.2.1"/>
    </reaction>
</comment>
<comment type="pathway">
    <text evidence="1">Amino-acid biosynthesis; L-arginine biosynthesis; L-arginine from L-ornithine and carbamoyl phosphate: step 3/3.</text>
</comment>
<comment type="subcellular location">
    <subcellularLocation>
        <location evidence="1">Cytoplasm</location>
    </subcellularLocation>
</comment>
<comment type="similarity">
    <text evidence="1">Belongs to the lyase 1 family. Argininosuccinate lyase subfamily.</text>
</comment>
<accession>B0UJ26</accession>
<organism>
    <name type="scientific">Methylobacterium sp. (strain 4-46)</name>
    <dbReference type="NCBI Taxonomy" id="426117"/>
    <lineage>
        <taxon>Bacteria</taxon>
        <taxon>Pseudomonadati</taxon>
        <taxon>Pseudomonadota</taxon>
        <taxon>Alphaproteobacteria</taxon>
        <taxon>Hyphomicrobiales</taxon>
        <taxon>Methylobacteriaceae</taxon>
        <taxon>Methylobacterium</taxon>
    </lineage>
</organism>
<feature type="chain" id="PRO_1000089095" description="Argininosuccinate lyase">
    <location>
        <begin position="1"/>
        <end position="462"/>
    </location>
</feature>
<reference key="1">
    <citation type="submission" date="2008-02" db="EMBL/GenBank/DDBJ databases">
        <title>Complete sequence of chromosome of Methylobacterium sp. 4-46.</title>
        <authorList>
            <consortium name="US DOE Joint Genome Institute"/>
            <person name="Copeland A."/>
            <person name="Lucas S."/>
            <person name="Lapidus A."/>
            <person name="Glavina del Rio T."/>
            <person name="Dalin E."/>
            <person name="Tice H."/>
            <person name="Bruce D."/>
            <person name="Goodwin L."/>
            <person name="Pitluck S."/>
            <person name="Chertkov O."/>
            <person name="Brettin T."/>
            <person name="Detter J.C."/>
            <person name="Han C."/>
            <person name="Kuske C.R."/>
            <person name="Schmutz J."/>
            <person name="Larimer F."/>
            <person name="Land M."/>
            <person name="Hauser L."/>
            <person name="Kyrpides N."/>
            <person name="Ivanova N."/>
            <person name="Marx C.J."/>
            <person name="Richardson P."/>
        </authorList>
    </citation>
    <scope>NUCLEOTIDE SEQUENCE [LARGE SCALE GENOMIC DNA]</scope>
    <source>
        <strain>4-46</strain>
    </source>
</reference>
<sequence length="462" mass="49298">MSNRMWGGRFASGPAEIMEEINASIGFDKRLAPQDIRGSLAHVAMLGKTGILPQADVAAIEAGLKTVQAEIESGAFTFQRALEDIHMNVESRLTELVGPAAGRLHTARSRNDQVATDMRLWVRDTLDALDAQAADLQRALAALALAHSGTVMPGFTHLQSAQPVTFGHHLLAYVEMLGRDRGRFRDARARLNECPLGAAALAGTSFPIDRHATAAALGFDRPTANSLDSVADRDFALEALAAAAIAAVHLSRFAEEIVVWTSAQFGFVRLSDRYTTGSSIMPQKRNPDAAELVRAKAGRVIGALAGLLIVMKGLPLAYSKDMQEDKEGTFDALQTLSLCLAAMTGMVRDLEPVPEVLKAAAGAGYATATDLADWLVRELGLPFRDAHHVTGRLVGRASARGVGLEALSLAEMREEEPRITEAVYAVLGVENSVASRTSYGGTAPANVRAQAERWLAALGDTQ</sequence>
<keyword id="KW-0028">Amino-acid biosynthesis</keyword>
<keyword id="KW-0055">Arginine biosynthesis</keyword>
<keyword id="KW-0963">Cytoplasm</keyword>
<keyword id="KW-0456">Lyase</keyword>
<evidence type="ECO:0000255" key="1">
    <source>
        <dbReference type="HAMAP-Rule" id="MF_00006"/>
    </source>
</evidence>
<gene>
    <name evidence="1" type="primary">argH</name>
    <name type="ordered locus">M446_5988</name>
</gene>
<name>ARLY_METS4</name>
<proteinExistence type="inferred from homology"/>
<protein>
    <recommendedName>
        <fullName evidence="1">Argininosuccinate lyase</fullName>
        <shortName evidence="1">ASAL</shortName>
        <ecNumber evidence="1">4.3.2.1</ecNumber>
    </recommendedName>
    <alternativeName>
        <fullName evidence="1">Arginosuccinase</fullName>
    </alternativeName>
</protein>
<dbReference type="EC" id="4.3.2.1" evidence="1"/>
<dbReference type="EMBL" id="CP000943">
    <property type="protein sequence ID" value="ACA20265.1"/>
    <property type="molecule type" value="Genomic_DNA"/>
</dbReference>
<dbReference type="RefSeq" id="WP_012335643.1">
    <property type="nucleotide sequence ID" value="NC_010511.1"/>
</dbReference>
<dbReference type="SMR" id="B0UJ26"/>
<dbReference type="STRING" id="426117.M446_5988"/>
<dbReference type="KEGG" id="met:M446_5988"/>
<dbReference type="eggNOG" id="COG0165">
    <property type="taxonomic scope" value="Bacteria"/>
</dbReference>
<dbReference type="HOGENOM" id="CLU_027272_2_3_5"/>
<dbReference type="UniPathway" id="UPA00068">
    <property type="reaction ID" value="UER00114"/>
</dbReference>
<dbReference type="GO" id="GO:0005829">
    <property type="term" value="C:cytosol"/>
    <property type="evidence" value="ECO:0007669"/>
    <property type="project" value="TreeGrafter"/>
</dbReference>
<dbReference type="GO" id="GO:0004056">
    <property type="term" value="F:argininosuccinate lyase activity"/>
    <property type="evidence" value="ECO:0007669"/>
    <property type="project" value="UniProtKB-UniRule"/>
</dbReference>
<dbReference type="GO" id="GO:0042450">
    <property type="term" value="P:arginine biosynthetic process via ornithine"/>
    <property type="evidence" value="ECO:0007669"/>
    <property type="project" value="InterPro"/>
</dbReference>
<dbReference type="GO" id="GO:0006526">
    <property type="term" value="P:L-arginine biosynthetic process"/>
    <property type="evidence" value="ECO:0007669"/>
    <property type="project" value="UniProtKB-UniRule"/>
</dbReference>
<dbReference type="CDD" id="cd01359">
    <property type="entry name" value="Argininosuccinate_lyase"/>
    <property type="match status" value="1"/>
</dbReference>
<dbReference type="FunFam" id="1.10.275.10:FF:000002">
    <property type="entry name" value="Argininosuccinate lyase"/>
    <property type="match status" value="1"/>
</dbReference>
<dbReference type="FunFam" id="1.10.40.30:FF:000001">
    <property type="entry name" value="Argininosuccinate lyase"/>
    <property type="match status" value="1"/>
</dbReference>
<dbReference type="FunFam" id="1.20.200.10:FF:000015">
    <property type="entry name" value="argininosuccinate lyase isoform X2"/>
    <property type="match status" value="1"/>
</dbReference>
<dbReference type="Gene3D" id="1.10.40.30">
    <property type="entry name" value="Fumarase/aspartase (C-terminal domain)"/>
    <property type="match status" value="1"/>
</dbReference>
<dbReference type="Gene3D" id="1.20.200.10">
    <property type="entry name" value="Fumarase/aspartase (Central domain)"/>
    <property type="match status" value="1"/>
</dbReference>
<dbReference type="Gene3D" id="1.10.275.10">
    <property type="entry name" value="Fumarase/aspartase (N-terminal domain)"/>
    <property type="match status" value="1"/>
</dbReference>
<dbReference type="HAMAP" id="MF_00006">
    <property type="entry name" value="Arg_succ_lyase"/>
    <property type="match status" value="1"/>
</dbReference>
<dbReference type="InterPro" id="IPR029419">
    <property type="entry name" value="Arg_succ_lyase_C"/>
</dbReference>
<dbReference type="InterPro" id="IPR009049">
    <property type="entry name" value="Argininosuccinate_lyase"/>
</dbReference>
<dbReference type="InterPro" id="IPR024083">
    <property type="entry name" value="Fumarase/histidase_N"/>
</dbReference>
<dbReference type="InterPro" id="IPR020557">
    <property type="entry name" value="Fumarate_lyase_CS"/>
</dbReference>
<dbReference type="InterPro" id="IPR000362">
    <property type="entry name" value="Fumarate_lyase_fam"/>
</dbReference>
<dbReference type="InterPro" id="IPR022761">
    <property type="entry name" value="Fumarate_lyase_N"/>
</dbReference>
<dbReference type="InterPro" id="IPR008948">
    <property type="entry name" value="L-Aspartase-like"/>
</dbReference>
<dbReference type="NCBIfam" id="TIGR00838">
    <property type="entry name" value="argH"/>
    <property type="match status" value="1"/>
</dbReference>
<dbReference type="PANTHER" id="PTHR43814">
    <property type="entry name" value="ARGININOSUCCINATE LYASE"/>
    <property type="match status" value="1"/>
</dbReference>
<dbReference type="PANTHER" id="PTHR43814:SF1">
    <property type="entry name" value="ARGININOSUCCINATE LYASE"/>
    <property type="match status" value="1"/>
</dbReference>
<dbReference type="Pfam" id="PF14698">
    <property type="entry name" value="ASL_C2"/>
    <property type="match status" value="1"/>
</dbReference>
<dbReference type="Pfam" id="PF00206">
    <property type="entry name" value="Lyase_1"/>
    <property type="match status" value="1"/>
</dbReference>
<dbReference type="PRINTS" id="PR00145">
    <property type="entry name" value="ARGSUCLYASE"/>
</dbReference>
<dbReference type="PRINTS" id="PR00149">
    <property type="entry name" value="FUMRATELYASE"/>
</dbReference>
<dbReference type="SUPFAM" id="SSF48557">
    <property type="entry name" value="L-aspartase-like"/>
    <property type="match status" value="1"/>
</dbReference>
<dbReference type="PROSITE" id="PS00163">
    <property type="entry name" value="FUMARATE_LYASES"/>
    <property type="match status" value="1"/>
</dbReference>